<keyword id="KW-0386">Hypusine biosynthesis</keyword>
<keyword id="KW-0520">NAD</keyword>
<keyword id="KW-0808">Transferase</keyword>
<comment type="function">
    <text evidence="1">Catalyzes the NAD-dependent oxidative cleavage of spermidine and the subsequent transfer of the butylamine moiety of spermidine to the epsilon-amino group of a specific lysine residue of the eIF-5A precursor protein to form the intermediate deoxyhypusine residue.</text>
</comment>
<comment type="catalytic activity">
    <reaction evidence="1">
        <text>[eIF5A protein]-L-lysine + spermidine = [eIF5A protein]-deoxyhypusine + propane-1,3-diamine</text>
        <dbReference type="Rhea" id="RHEA:33299"/>
        <dbReference type="Rhea" id="RHEA-COMP:10143"/>
        <dbReference type="Rhea" id="RHEA-COMP:10144"/>
        <dbReference type="ChEBI" id="CHEBI:29969"/>
        <dbReference type="ChEBI" id="CHEBI:57484"/>
        <dbReference type="ChEBI" id="CHEBI:57834"/>
        <dbReference type="ChEBI" id="CHEBI:82657"/>
        <dbReference type="EC" id="2.5.1.46"/>
    </reaction>
</comment>
<comment type="cofactor">
    <cofactor evidence="1">
        <name>NAD(+)</name>
        <dbReference type="ChEBI" id="CHEBI:57540"/>
    </cofactor>
</comment>
<comment type="pathway">
    <text evidence="1">Protein modification; eIF5A hypusination.</text>
</comment>
<comment type="similarity">
    <text evidence="1">Belongs to the deoxyhypusine synthase family.</text>
</comment>
<feature type="chain" id="PRO_0000134501" description="Probable deoxyhypusine synthase">
    <location>
        <begin position="1"/>
        <end position="311"/>
    </location>
</feature>
<feature type="active site" description="Nucleophile" evidence="1">
    <location>
        <position position="284"/>
    </location>
</feature>
<protein>
    <recommendedName>
        <fullName evidence="1">Probable deoxyhypusine synthase</fullName>
        <shortName evidence="1">DHS</shortName>
        <ecNumber evidence="1">2.5.1.46</ecNumber>
    </recommendedName>
</protein>
<name>DHYS_PICTO</name>
<evidence type="ECO:0000255" key="1">
    <source>
        <dbReference type="HAMAP-Rule" id="MF_00153"/>
    </source>
</evidence>
<accession>Q6KZL5</accession>
<reference key="1">
    <citation type="journal article" date="2004" name="Proc. Natl. Acad. Sci. U.S.A.">
        <title>Genome sequence of Picrophilus torridus and its implications for life around pH 0.</title>
        <authorList>
            <person name="Fuetterer O."/>
            <person name="Angelov A."/>
            <person name="Liesegang H."/>
            <person name="Gottschalk G."/>
            <person name="Schleper C."/>
            <person name="Schepers B."/>
            <person name="Dock C."/>
            <person name="Antranikian G."/>
            <person name="Liebl W."/>
        </authorList>
    </citation>
    <scope>NUCLEOTIDE SEQUENCE [LARGE SCALE GENOMIC DNA]</scope>
    <source>
        <strain>ATCC 700027 / DSM 9790 / JCM 10055 / NBRC 100828 / KAW 2/3</strain>
    </source>
</reference>
<sequence>MDRNELLKEPVKDISIKSETTISELIGMFGRSGGFTAKKIYEGYEIIKEMFNDDETTFLSFPADIISTGTRGIINELVKRKLVDVIITTNGTLDHDIARTYRDYYAGTFNFSDAMLRDLGINRLGNVFVPDESYGSIIEEKVMPILDELYKEKKEWSGYELIWELGKRINNESSIIYNAYKNRIPVFIPGMTDGSVGSQLWSFYEMNRDFRINLLEDEHKLSDIIFDAKKTGAIMIGGGISKHHTIWWNQFRDGLNQAVYITTAQEYDGSLSGAKLEEAISWKKVREDARFVNIYGDATVILPLIVAPFLK</sequence>
<proteinExistence type="inferred from homology"/>
<gene>
    <name evidence="1" type="primary">dys</name>
    <name type="ordered locus">PTO1252</name>
</gene>
<dbReference type="EC" id="2.5.1.46" evidence="1"/>
<dbReference type="EMBL" id="AE017261">
    <property type="protein sequence ID" value="AAT43837.1"/>
    <property type="molecule type" value="Genomic_DNA"/>
</dbReference>
<dbReference type="RefSeq" id="WP_011178053.1">
    <property type="nucleotide sequence ID" value="NC_005877.1"/>
</dbReference>
<dbReference type="SMR" id="Q6KZL5"/>
<dbReference type="FunCoup" id="Q6KZL5">
    <property type="interactions" value="158"/>
</dbReference>
<dbReference type="STRING" id="263820.PTO1252"/>
<dbReference type="PaxDb" id="263820-PTO1252"/>
<dbReference type="GeneID" id="2844252"/>
<dbReference type="KEGG" id="pto:PTO1252"/>
<dbReference type="PATRIC" id="fig|263820.9.peg.1300"/>
<dbReference type="eggNOG" id="arCOG04142">
    <property type="taxonomic scope" value="Archaea"/>
</dbReference>
<dbReference type="HOGENOM" id="CLU_039781_1_0_2"/>
<dbReference type="InParanoid" id="Q6KZL5"/>
<dbReference type="OrthoDB" id="17730at2157"/>
<dbReference type="UniPathway" id="UPA00354"/>
<dbReference type="Proteomes" id="UP000000438">
    <property type="component" value="Chromosome"/>
</dbReference>
<dbReference type="GO" id="GO:0005737">
    <property type="term" value="C:cytoplasm"/>
    <property type="evidence" value="ECO:0007669"/>
    <property type="project" value="TreeGrafter"/>
</dbReference>
<dbReference type="GO" id="GO:0034038">
    <property type="term" value="F:deoxyhypusine synthase activity"/>
    <property type="evidence" value="ECO:0007669"/>
    <property type="project" value="UniProtKB-UniRule"/>
</dbReference>
<dbReference type="FunFam" id="3.40.910.10:FF:000010">
    <property type="entry name" value="Deoxyhypusine synthase"/>
    <property type="match status" value="1"/>
</dbReference>
<dbReference type="Gene3D" id="3.40.910.10">
    <property type="entry name" value="Deoxyhypusine synthase"/>
    <property type="match status" value="1"/>
</dbReference>
<dbReference type="HAMAP" id="MF_00153">
    <property type="entry name" value="DHS"/>
    <property type="match status" value="1"/>
</dbReference>
<dbReference type="InterPro" id="IPR022899">
    <property type="entry name" value="Deoxyhypus_synthase_arc"/>
</dbReference>
<dbReference type="InterPro" id="IPR002773">
    <property type="entry name" value="Deoxyhypusine_synthase"/>
</dbReference>
<dbReference type="InterPro" id="IPR036982">
    <property type="entry name" value="Deoxyhypusine_synthase_sf"/>
</dbReference>
<dbReference type="InterPro" id="IPR029035">
    <property type="entry name" value="DHS-like_NAD/FAD-binding_dom"/>
</dbReference>
<dbReference type="NCBIfam" id="TIGR00321">
    <property type="entry name" value="dhys"/>
    <property type="match status" value="1"/>
</dbReference>
<dbReference type="NCBIfam" id="NF002294">
    <property type="entry name" value="PRK01221.1"/>
    <property type="match status" value="1"/>
</dbReference>
<dbReference type="PANTHER" id="PTHR11703">
    <property type="entry name" value="DEOXYHYPUSINE SYNTHASE"/>
    <property type="match status" value="1"/>
</dbReference>
<dbReference type="PANTHER" id="PTHR11703:SF0">
    <property type="entry name" value="DEOXYHYPUSINE SYNTHASE"/>
    <property type="match status" value="1"/>
</dbReference>
<dbReference type="Pfam" id="PF01916">
    <property type="entry name" value="DS"/>
    <property type="match status" value="1"/>
</dbReference>
<dbReference type="SUPFAM" id="SSF52467">
    <property type="entry name" value="DHS-like NAD/FAD-binding domain"/>
    <property type="match status" value="1"/>
</dbReference>
<organism>
    <name type="scientific">Picrophilus torridus (strain ATCC 700027 / DSM 9790 / JCM 10055 / NBRC 100828 / KAW 2/3)</name>
    <dbReference type="NCBI Taxonomy" id="1122961"/>
    <lineage>
        <taxon>Archaea</taxon>
        <taxon>Methanobacteriati</taxon>
        <taxon>Thermoplasmatota</taxon>
        <taxon>Thermoplasmata</taxon>
        <taxon>Thermoplasmatales</taxon>
        <taxon>Picrophilaceae</taxon>
        <taxon>Picrophilus</taxon>
    </lineage>
</organism>